<feature type="chain" id="PRO_0000177174" description="Large ribosomal subunit protein bL20">
    <location>
        <begin position="1"/>
        <end position="119"/>
    </location>
</feature>
<comment type="function">
    <text evidence="1">Binds directly to 23S ribosomal RNA and is necessary for the in vitro assembly process of the 50S ribosomal subunit. It is not involved in the protein synthesizing functions of that subunit.</text>
</comment>
<comment type="similarity">
    <text evidence="1">Belongs to the bacterial ribosomal protein bL20 family.</text>
</comment>
<evidence type="ECO:0000255" key="1">
    <source>
        <dbReference type="HAMAP-Rule" id="MF_00382"/>
    </source>
</evidence>
<evidence type="ECO:0000305" key="2"/>
<reference key="1">
    <citation type="journal article" date="2001" name="Science">
        <title>Comparative genomics of Listeria species.</title>
        <authorList>
            <person name="Glaser P."/>
            <person name="Frangeul L."/>
            <person name="Buchrieser C."/>
            <person name="Rusniok C."/>
            <person name="Amend A."/>
            <person name="Baquero F."/>
            <person name="Berche P."/>
            <person name="Bloecker H."/>
            <person name="Brandt P."/>
            <person name="Chakraborty T."/>
            <person name="Charbit A."/>
            <person name="Chetouani F."/>
            <person name="Couve E."/>
            <person name="de Daruvar A."/>
            <person name="Dehoux P."/>
            <person name="Domann E."/>
            <person name="Dominguez-Bernal G."/>
            <person name="Duchaud E."/>
            <person name="Durant L."/>
            <person name="Dussurget O."/>
            <person name="Entian K.-D."/>
            <person name="Fsihi H."/>
            <person name="Garcia-del Portillo F."/>
            <person name="Garrido P."/>
            <person name="Gautier L."/>
            <person name="Goebel W."/>
            <person name="Gomez-Lopez N."/>
            <person name="Hain T."/>
            <person name="Hauf J."/>
            <person name="Jackson D."/>
            <person name="Jones L.-M."/>
            <person name="Kaerst U."/>
            <person name="Kreft J."/>
            <person name="Kuhn M."/>
            <person name="Kunst F."/>
            <person name="Kurapkat G."/>
            <person name="Madueno E."/>
            <person name="Maitournam A."/>
            <person name="Mata Vicente J."/>
            <person name="Ng E."/>
            <person name="Nedjari H."/>
            <person name="Nordsiek G."/>
            <person name="Novella S."/>
            <person name="de Pablos B."/>
            <person name="Perez-Diaz J.-C."/>
            <person name="Purcell R."/>
            <person name="Remmel B."/>
            <person name="Rose M."/>
            <person name="Schlueter T."/>
            <person name="Simoes N."/>
            <person name="Tierrez A."/>
            <person name="Vazquez-Boland J.-A."/>
            <person name="Voss H."/>
            <person name="Wehland J."/>
            <person name="Cossart P."/>
        </authorList>
    </citation>
    <scope>NUCLEOTIDE SEQUENCE [LARGE SCALE GENOMIC DNA]</scope>
    <source>
        <strain>ATCC BAA-680 / CLIP 11262</strain>
    </source>
</reference>
<dbReference type="EMBL" id="AL596170">
    <property type="protein sequence ID" value="CAC97125.1"/>
    <property type="molecule type" value="Genomic_DNA"/>
</dbReference>
<dbReference type="PIR" id="AE1669">
    <property type="entry name" value="AE1669"/>
</dbReference>
<dbReference type="RefSeq" id="WP_003720097.1">
    <property type="nucleotide sequence ID" value="NC_003212.1"/>
</dbReference>
<dbReference type="SMR" id="P66104"/>
<dbReference type="STRING" id="272626.gene:17566253"/>
<dbReference type="GeneID" id="93239692"/>
<dbReference type="KEGG" id="lin:rplT"/>
<dbReference type="eggNOG" id="COG0292">
    <property type="taxonomic scope" value="Bacteria"/>
</dbReference>
<dbReference type="HOGENOM" id="CLU_123265_0_1_9"/>
<dbReference type="OrthoDB" id="9808966at2"/>
<dbReference type="Proteomes" id="UP000002513">
    <property type="component" value="Chromosome"/>
</dbReference>
<dbReference type="GO" id="GO:1990904">
    <property type="term" value="C:ribonucleoprotein complex"/>
    <property type="evidence" value="ECO:0007669"/>
    <property type="project" value="UniProtKB-KW"/>
</dbReference>
<dbReference type="GO" id="GO:0005840">
    <property type="term" value="C:ribosome"/>
    <property type="evidence" value="ECO:0007669"/>
    <property type="project" value="UniProtKB-KW"/>
</dbReference>
<dbReference type="GO" id="GO:0019843">
    <property type="term" value="F:rRNA binding"/>
    <property type="evidence" value="ECO:0007669"/>
    <property type="project" value="UniProtKB-UniRule"/>
</dbReference>
<dbReference type="GO" id="GO:0003735">
    <property type="term" value="F:structural constituent of ribosome"/>
    <property type="evidence" value="ECO:0007669"/>
    <property type="project" value="InterPro"/>
</dbReference>
<dbReference type="GO" id="GO:0000027">
    <property type="term" value="P:ribosomal large subunit assembly"/>
    <property type="evidence" value="ECO:0007669"/>
    <property type="project" value="UniProtKB-UniRule"/>
</dbReference>
<dbReference type="GO" id="GO:0006412">
    <property type="term" value="P:translation"/>
    <property type="evidence" value="ECO:0007669"/>
    <property type="project" value="InterPro"/>
</dbReference>
<dbReference type="CDD" id="cd07026">
    <property type="entry name" value="Ribosomal_L20"/>
    <property type="match status" value="1"/>
</dbReference>
<dbReference type="FunFam" id="1.10.1900.20:FF:000001">
    <property type="entry name" value="50S ribosomal protein L20"/>
    <property type="match status" value="1"/>
</dbReference>
<dbReference type="Gene3D" id="6.10.160.10">
    <property type="match status" value="1"/>
</dbReference>
<dbReference type="Gene3D" id="1.10.1900.20">
    <property type="entry name" value="Ribosomal protein L20"/>
    <property type="match status" value="1"/>
</dbReference>
<dbReference type="HAMAP" id="MF_00382">
    <property type="entry name" value="Ribosomal_bL20"/>
    <property type="match status" value="1"/>
</dbReference>
<dbReference type="InterPro" id="IPR005813">
    <property type="entry name" value="Ribosomal_bL20"/>
</dbReference>
<dbReference type="InterPro" id="IPR049946">
    <property type="entry name" value="RIBOSOMAL_L20_CS"/>
</dbReference>
<dbReference type="InterPro" id="IPR035566">
    <property type="entry name" value="Ribosomal_protein_bL20_C"/>
</dbReference>
<dbReference type="NCBIfam" id="TIGR01032">
    <property type="entry name" value="rplT_bact"/>
    <property type="match status" value="1"/>
</dbReference>
<dbReference type="PANTHER" id="PTHR10986">
    <property type="entry name" value="39S RIBOSOMAL PROTEIN L20"/>
    <property type="match status" value="1"/>
</dbReference>
<dbReference type="Pfam" id="PF00453">
    <property type="entry name" value="Ribosomal_L20"/>
    <property type="match status" value="1"/>
</dbReference>
<dbReference type="PRINTS" id="PR00062">
    <property type="entry name" value="RIBOSOMALL20"/>
</dbReference>
<dbReference type="SUPFAM" id="SSF74731">
    <property type="entry name" value="Ribosomal protein L20"/>
    <property type="match status" value="1"/>
</dbReference>
<dbReference type="PROSITE" id="PS00937">
    <property type="entry name" value="RIBOSOMAL_L20"/>
    <property type="match status" value="1"/>
</dbReference>
<gene>
    <name evidence="1" type="primary">rplT</name>
    <name type="ordered locus">lin1895</name>
</gene>
<sequence>MPRVKGGTVTRKRRKKIVKLAKGYYGSKHLLFKVANQAVMKSYQYAYRDRRQKKRDFRRLWIARINAAARMQDLSYSKLMHGLKLAGIDINRKMLADLAVNDIASFNTLADSAKKALAK</sequence>
<accession>P66104</accession>
<accession>Q92AM5</accession>
<keyword id="KW-0687">Ribonucleoprotein</keyword>
<keyword id="KW-0689">Ribosomal protein</keyword>
<keyword id="KW-0694">RNA-binding</keyword>
<keyword id="KW-0699">rRNA-binding</keyword>
<organism>
    <name type="scientific">Listeria innocua serovar 6a (strain ATCC BAA-680 / CLIP 11262)</name>
    <dbReference type="NCBI Taxonomy" id="272626"/>
    <lineage>
        <taxon>Bacteria</taxon>
        <taxon>Bacillati</taxon>
        <taxon>Bacillota</taxon>
        <taxon>Bacilli</taxon>
        <taxon>Bacillales</taxon>
        <taxon>Listeriaceae</taxon>
        <taxon>Listeria</taxon>
    </lineage>
</organism>
<proteinExistence type="inferred from homology"/>
<protein>
    <recommendedName>
        <fullName evidence="1">Large ribosomal subunit protein bL20</fullName>
    </recommendedName>
    <alternativeName>
        <fullName evidence="2">50S ribosomal protein L20</fullName>
    </alternativeName>
</protein>
<name>RL20_LISIN</name>